<dbReference type="EC" id="2.3.1.1"/>
<dbReference type="EMBL" id="M38359">
    <property type="status" value="NOT_ANNOTATED_CDS"/>
    <property type="molecule type" value="Genomic_DNA"/>
</dbReference>
<dbReference type="RefSeq" id="WP_003253723.1">
    <property type="nucleotide sequence ID" value="NZ_SPUU01000008.1"/>
</dbReference>
<dbReference type="SMR" id="P0A100"/>
<dbReference type="GeneID" id="83682923"/>
<dbReference type="eggNOG" id="COG0548">
    <property type="taxonomic scope" value="Bacteria"/>
</dbReference>
<dbReference type="eggNOG" id="COG1246">
    <property type="taxonomic scope" value="Bacteria"/>
</dbReference>
<dbReference type="OMA" id="KRKYNWD"/>
<dbReference type="UniPathway" id="UPA00068">
    <property type="reaction ID" value="UER00106"/>
</dbReference>
<dbReference type="GO" id="GO:0005737">
    <property type="term" value="C:cytoplasm"/>
    <property type="evidence" value="ECO:0007669"/>
    <property type="project" value="UniProtKB-SubCell"/>
</dbReference>
<dbReference type="GO" id="GO:0004042">
    <property type="term" value="F:L-glutamate N-acetyltransferase activity"/>
    <property type="evidence" value="ECO:0007669"/>
    <property type="project" value="UniProtKB-UniRule"/>
</dbReference>
<dbReference type="GO" id="GO:0006526">
    <property type="term" value="P:L-arginine biosynthetic process"/>
    <property type="evidence" value="ECO:0007669"/>
    <property type="project" value="UniProtKB-UniRule"/>
</dbReference>
<dbReference type="CDD" id="cd04237">
    <property type="entry name" value="AAK_NAGS-ABP"/>
    <property type="match status" value="1"/>
</dbReference>
<dbReference type="CDD" id="cd04301">
    <property type="entry name" value="NAT_SF"/>
    <property type="match status" value="1"/>
</dbReference>
<dbReference type="Gene3D" id="3.40.630.30">
    <property type="match status" value="1"/>
</dbReference>
<dbReference type="Gene3D" id="3.40.1160.10">
    <property type="entry name" value="Acetylglutamate kinase-like"/>
    <property type="match status" value="1"/>
</dbReference>
<dbReference type="HAMAP" id="MF_01105">
    <property type="entry name" value="N_acetyl_glu_synth"/>
    <property type="match status" value="1"/>
</dbReference>
<dbReference type="InterPro" id="IPR036393">
    <property type="entry name" value="AceGlu_kinase-like_sf"/>
</dbReference>
<dbReference type="InterPro" id="IPR016181">
    <property type="entry name" value="Acyl_CoA_acyltransferase"/>
</dbReference>
<dbReference type="InterPro" id="IPR001048">
    <property type="entry name" value="Asp/Glu/Uridylate_kinase"/>
</dbReference>
<dbReference type="InterPro" id="IPR000182">
    <property type="entry name" value="GNAT_dom"/>
</dbReference>
<dbReference type="InterPro" id="IPR033719">
    <property type="entry name" value="NAGS_kin"/>
</dbReference>
<dbReference type="InterPro" id="IPR010167">
    <property type="entry name" value="NH2A_AcTrfase"/>
</dbReference>
<dbReference type="NCBIfam" id="TIGR01890">
    <property type="entry name" value="N-Ac-Glu-synth"/>
    <property type="match status" value="1"/>
</dbReference>
<dbReference type="NCBIfam" id="NF003641">
    <property type="entry name" value="PRK05279.1"/>
    <property type="match status" value="1"/>
</dbReference>
<dbReference type="PANTHER" id="PTHR30602">
    <property type="entry name" value="AMINO-ACID ACETYLTRANSFERASE"/>
    <property type="match status" value="1"/>
</dbReference>
<dbReference type="PANTHER" id="PTHR30602:SF12">
    <property type="entry name" value="AMINO-ACID ACETYLTRANSFERASE NAGS1, CHLOROPLASTIC-RELATED"/>
    <property type="match status" value="1"/>
</dbReference>
<dbReference type="Pfam" id="PF00696">
    <property type="entry name" value="AA_kinase"/>
    <property type="match status" value="1"/>
</dbReference>
<dbReference type="Pfam" id="PF00583">
    <property type="entry name" value="Acetyltransf_1"/>
    <property type="match status" value="1"/>
</dbReference>
<dbReference type="PIRSF" id="PIRSF000423">
    <property type="entry name" value="ArgA"/>
    <property type="match status" value="1"/>
</dbReference>
<dbReference type="SUPFAM" id="SSF55729">
    <property type="entry name" value="Acyl-CoA N-acyltransferases (Nat)"/>
    <property type="match status" value="1"/>
</dbReference>
<dbReference type="SUPFAM" id="SSF53633">
    <property type="entry name" value="Carbamate kinase-like"/>
    <property type="match status" value="1"/>
</dbReference>
<dbReference type="PROSITE" id="PS51186">
    <property type="entry name" value="GNAT"/>
    <property type="match status" value="1"/>
</dbReference>
<keyword id="KW-0012">Acyltransferase</keyword>
<keyword id="KW-0028">Amino-acid biosynthesis</keyword>
<keyword id="KW-0055">Arginine biosynthesis</keyword>
<keyword id="KW-0963">Cytoplasm</keyword>
<keyword id="KW-0808">Transferase</keyword>
<protein>
    <recommendedName>
        <fullName>Amino-acid acetyltransferase</fullName>
        <ecNumber>2.3.1.1</ecNumber>
    </recommendedName>
    <alternativeName>
        <fullName>N-acetylglutamate synthase</fullName>
        <shortName>AGS</shortName>
        <shortName>NAGS</shortName>
    </alternativeName>
</protein>
<gene>
    <name type="primary">argA</name>
</gene>
<feature type="chain" id="PRO_0000186800" description="Amino-acid acetyltransferase">
    <location>
        <begin position="1"/>
        <end position="432"/>
    </location>
</feature>
<feature type="domain" description="N-acetyltransferase">
    <location>
        <begin position="286"/>
        <end position="432"/>
    </location>
</feature>
<proteinExistence type="inferred from homology"/>
<name>ARGA_PSEPU</name>
<evidence type="ECO:0000250" key="1"/>
<evidence type="ECO:0000305" key="2"/>
<organism>
    <name type="scientific">Pseudomonas putida</name>
    <name type="common">Arthrobacter siderocapsulatus</name>
    <dbReference type="NCBI Taxonomy" id="303"/>
    <lineage>
        <taxon>Bacteria</taxon>
        <taxon>Pseudomonadati</taxon>
        <taxon>Pseudomonadota</taxon>
        <taxon>Gammaproteobacteria</taxon>
        <taxon>Pseudomonadales</taxon>
        <taxon>Pseudomonadaceae</taxon>
        <taxon>Pseudomonas</taxon>
    </lineage>
</organism>
<accession>P0A100</accession>
<accession>P32042</accession>
<comment type="catalytic activity">
    <reaction>
        <text>L-glutamate + acetyl-CoA = N-acetyl-L-glutamate + CoA + H(+)</text>
        <dbReference type="Rhea" id="RHEA:24292"/>
        <dbReference type="ChEBI" id="CHEBI:15378"/>
        <dbReference type="ChEBI" id="CHEBI:29985"/>
        <dbReference type="ChEBI" id="CHEBI:44337"/>
        <dbReference type="ChEBI" id="CHEBI:57287"/>
        <dbReference type="ChEBI" id="CHEBI:57288"/>
        <dbReference type="EC" id="2.3.1.1"/>
    </reaction>
</comment>
<comment type="pathway">
    <text>Amino-acid biosynthesis; L-arginine biosynthesis; N(2)-acetyl-L-ornithine from L-glutamate: step 1/4.</text>
</comment>
<comment type="subcellular location">
    <subcellularLocation>
        <location evidence="1">Cytoplasm</location>
    </subcellularLocation>
</comment>
<comment type="similarity">
    <text evidence="2">Belongs to the acetyltransferase family. ArgA subfamily.</text>
</comment>
<comment type="sequence caution" evidence="2">
    <conflict type="frameshift">
        <sequence resource="EMBL" id="M38359"/>
    </conflict>
</comment>
<reference key="1">
    <citation type="submission" date="1991-02" db="EMBL/GenBank/DDBJ databases">
        <authorList>
            <person name="Dharmsthiti S."/>
            <person name="Krishnapillai V."/>
        </authorList>
    </citation>
    <scope>NUCLEOTIDE SEQUENCE [GENOMIC DNA]</scope>
    <source>
        <strain>PPN</strain>
    </source>
</reference>
<sequence length="432" mass="47440">MPDYVNWLRHASPYINAHRDCTFVVMLPGDGVEHPNFGNIVHDLVLLHSLGVRLVLVHGSRPQIESRLADRGLTPHYHRGMRITDAATLDCVIDAVGALRLAIEARLSMDIAASPMQGSRLRVASGNLVTARPIGVLEGVDYHHTGEVRRVDRKGISRLLDERSIVLLSPLGYSPTGEIFNLACEDVATRAAIELGADKLLLFGAEPGLLDADGRLVRELRPQQVAPHLQRLGSDYQGELLDAAAEACKGGVARSHIVSYAEDGALLTELFTRGGGGTLVSQEQFEVVREATIEDVGGLLELISPLEEQGILVRRSREVLEREIEQFSVVEREGMIIACAALYPIADSEAGELACLAVNPEYRHGGRGDELLERIESRARQMGLSTLFVLTTRTAHWFRERGFAPSGVERLPAARASLYNYQRNSKIFEKPL</sequence>